<accession>Q869Z4</accession>
<accession>Q55AF8</accession>
<reference key="1">
    <citation type="journal article" date="2002" name="Nature">
        <title>Sequence and analysis of chromosome 2 of Dictyostelium discoideum.</title>
        <authorList>
            <person name="Gloeckner G."/>
            <person name="Eichinger L."/>
            <person name="Szafranski K."/>
            <person name="Pachebat J.A."/>
            <person name="Bankier A.T."/>
            <person name="Dear P.H."/>
            <person name="Lehmann R."/>
            <person name="Baumgart C."/>
            <person name="Parra G."/>
            <person name="Abril J.F."/>
            <person name="Guigo R."/>
            <person name="Kumpf K."/>
            <person name="Tunggal B."/>
            <person name="Cox E.C."/>
            <person name="Quail M.A."/>
            <person name="Platzer M."/>
            <person name="Rosenthal A."/>
            <person name="Noegel A.A."/>
        </authorList>
    </citation>
    <scope>NUCLEOTIDE SEQUENCE [LARGE SCALE GENOMIC DNA]</scope>
    <source>
        <strain>AX4</strain>
    </source>
</reference>
<reference key="2">
    <citation type="journal article" date="2005" name="Nature">
        <title>The genome of the social amoeba Dictyostelium discoideum.</title>
        <authorList>
            <person name="Eichinger L."/>
            <person name="Pachebat J.A."/>
            <person name="Gloeckner G."/>
            <person name="Rajandream M.A."/>
            <person name="Sucgang R."/>
            <person name="Berriman M."/>
            <person name="Song J."/>
            <person name="Olsen R."/>
            <person name="Szafranski K."/>
            <person name="Xu Q."/>
            <person name="Tunggal B."/>
            <person name="Kummerfeld S."/>
            <person name="Madera M."/>
            <person name="Konfortov B.A."/>
            <person name="Rivero F."/>
            <person name="Bankier A.T."/>
            <person name="Lehmann R."/>
            <person name="Hamlin N."/>
            <person name="Davies R."/>
            <person name="Gaudet P."/>
            <person name="Fey P."/>
            <person name="Pilcher K."/>
            <person name="Chen G."/>
            <person name="Saunders D."/>
            <person name="Sodergren E.J."/>
            <person name="Davis P."/>
            <person name="Kerhornou A."/>
            <person name="Nie X."/>
            <person name="Hall N."/>
            <person name="Anjard C."/>
            <person name="Hemphill L."/>
            <person name="Bason N."/>
            <person name="Farbrother P."/>
            <person name="Desany B."/>
            <person name="Just E."/>
            <person name="Morio T."/>
            <person name="Rost R."/>
            <person name="Churcher C.M."/>
            <person name="Cooper J."/>
            <person name="Haydock S."/>
            <person name="van Driessche N."/>
            <person name="Cronin A."/>
            <person name="Goodhead I."/>
            <person name="Muzny D.M."/>
            <person name="Mourier T."/>
            <person name="Pain A."/>
            <person name="Lu M."/>
            <person name="Harper D."/>
            <person name="Lindsay R."/>
            <person name="Hauser H."/>
            <person name="James K.D."/>
            <person name="Quiles M."/>
            <person name="Madan Babu M."/>
            <person name="Saito T."/>
            <person name="Buchrieser C."/>
            <person name="Wardroper A."/>
            <person name="Felder M."/>
            <person name="Thangavelu M."/>
            <person name="Johnson D."/>
            <person name="Knights A."/>
            <person name="Loulseged H."/>
            <person name="Mungall K.L."/>
            <person name="Oliver K."/>
            <person name="Price C."/>
            <person name="Quail M.A."/>
            <person name="Urushihara H."/>
            <person name="Hernandez J."/>
            <person name="Rabbinowitsch E."/>
            <person name="Steffen D."/>
            <person name="Sanders M."/>
            <person name="Ma J."/>
            <person name="Kohara Y."/>
            <person name="Sharp S."/>
            <person name="Simmonds M.N."/>
            <person name="Spiegler S."/>
            <person name="Tivey A."/>
            <person name="Sugano S."/>
            <person name="White B."/>
            <person name="Walker D."/>
            <person name="Woodward J.R."/>
            <person name="Winckler T."/>
            <person name="Tanaka Y."/>
            <person name="Shaulsky G."/>
            <person name="Schleicher M."/>
            <person name="Weinstock G.M."/>
            <person name="Rosenthal A."/>
            <person name="Cox E.C."/>
            <person name="Chisholm R.L."/>
            <person name="Gibbs R.A."/>
            <person name="Loomis W.F."/>
            <person name="Platzer M."/>
            <person name="Kay R.R."/>
            <person name="Williams J.G."/>
            <person name="Dear P.H."/>
            <person name="Noegel A.A."/>
            <person name="Barrell B.G."/>
            <person name="Kuspa A."/>
        </authorList>
    </citation>
    <scope>NUCLEOTIDE SEQUENCE [LARGE SCALE GENOMIC DNA]</scope>
    <source>
        <strain>AX4</strain>
    </source>
</reference>
<protein>
    <recommendedName>
        <fullName>Phosphoenolpyruvate carboxykinase [GTP], mitochondrial</fullName>
        <shortName>PEPCK-M</shortName>
        <ecNumber evidence="3">4.1.1.32</ecNumber>
    </recommendedName>
</protein>
<gene>
    <name type="primary">pck2</name>
    <name type="ORF">DDB_G0271904</name>
</gene>
<keyword id="KW-0210">Decarboxylase</keyword>
<keyword id="KW-0312">Gluconeogenesis</keyword>
<keyword id="KW-0342">GTP-binding</keyword>
<keyword id="KW-0456">Lyase</keyword>
<keyword id="KW-0464">Manganese</keyword>
<keyword id="KW-0479">Metal-binding</keyword>
<keyword id="KW-0496">Mitochondrion</keyword>
<keyword id="KW-0547">Nucleotide-binding</keyword>
<keyword id="KW-1185">Reference proteome</keyword>
<keyword id="KW-0809">Transit peptide</keyword>
<sequence>MLKNFIQKGKLINSISSSSSFQSSTFLNNNGFNSGAWVGSRFFSLEQLKKKTKNQKLINWVEEQAKLCKPDNIYICDGSEEEFKKFTDDMVKSGTLIKLNSKRPNSFLARSDPSDVARVESRTYICAKTKEDAGPTNNWMDPNQMKQTLKPLFNGSMKGRTMYVMPFSMGPLGSDISHIGVQVTDSPFVVCNMKIMTRMGDKVLNQIKENDDFVPCLHSVGAPLAKGQKDSHWPCNPNKYIVHYPEERSIQSFGSGYGGNALLGKKCFSLRIASSMAKEGGWLAEHMLILSLTNDKGEKKYIAAAFPSACGKTNLAMANSVLPGYKVQVCGDDIAWMTMRNGQLYAINPEFGFFGVAPGTSASSNPNALAAISKNTLFTNVALTPDNDVWWEGLSSPPPTAIDWLGNEWHPNGEGNNTFAAHPNSRFTAPLSQCPSIDPEWNNPTGVPISAVIFGGRRSSTVPLVYQALNWKHGVFMGASTASELTAAAEGTVGTLRHDPFAMLPFCGYNMGDYFAHWLSMEQKAGSNADKLPKIFYVNWFRKNKTSGKFLWPGFGENVRVLKWIFDRCNSTLDTTDGKATQTPIGFVPSNNSIDLNGLEINKSSLKELFSLNKSEWLHDLKSMRQFCQQFGDRLPNEIKNQMDQLENRLNKD</sequence>
<name>PCKGM_DICDI</name>
<dbReference type="EC" id="4.1.1.32" evidence="3"/>
<dbReference type="EMBL" id="AAFI02000007">
    <property type="protein sequence ID" value="EAL71476.1"/>
    <property type="molecule type" value="Genomic_DNA"/>
</dbReference>
<dbReference type="RefSeq" id="XP_645396.1">
    <property type="nucleotide sequence ID" value="XM_640304.1"/>
</dbReference>
<dbReference type="SMR" id="Q869Z4"/>
<dbReference type="FunCoup" id="Q869Z4">
    <property type="interactions" value="67"/>
</dbReference>
<dbReference type="STRING" id="44689.Q869Z4"/>
<dbReference type="PaxDb" id="44689-DDB0230145"/>
<dbReference type="EnsemblProtists" id="EAL71476">
    <property type="protein sequence ID" value="EAL71476"/>
    <property type="gene ID" value="DDB_G0271904"/>
</dbReference>
<dbReference type="GeneID" id="8618224"/>
<dbReference type="KEGG" id="ddi:DDB_G0271904"/>
<dbReference type="dictyBase" id="DDB_G0271904">
    <property type="gene designation" value="pck2"/>
</dbReference>
<dbReference type="VEuPathDB" id="AmoebaDB:DDB_G0271904"/>
<dbReference type="eggNOG" id="KOG3749">
    <property type="taxonomic scope" value="Eukaryota"/>
</dbReference>
<dbReference type="HOGENOM" id="CLU_028872_1_1_1"/>
<dbReference type="InParanoid" id="Q869Z4"/>
<dbReference type="OMA" id="GPTNNWV"/>
<dbReference type="PhylomeDB" id="Q869Z4"/>
<dbReference type="Reactome" id="R-DDI-70263">
    <property type="pathway name" value="Gluconeogenesis"/>
</dbReference>
<dbReference type="UniPathway" id="UPA00138"/>
<dbReference type="PRO" id="PR:Q869Z4"/>
<dbReference type="Proteomes" id="UP000002195">
    <property type="component" value="Chromosome 2"/>
</dbReference>
<dbReference type="GO" id="GO:0005829">
    <property type="term" value="C:cytosol"/>
    <property type="evidence" value="ECO:0000318"/>
    <property type="project" value="GO_Central"/>
</dbReference>
<dbReference type="GO" id="GO:0005739">
    <property type="term" value="C:mitochondrion"/>
    <property type="evidence" value="ECO:0007669"/>
    <property type="project" value="UniProtKB-SubCell"/>
</dbReference>
<dbReference type="GO" id="GO:0005525">
    <property type="term" value="F:GTP binding"/>
    <property type="evidence" value="ECO:0007669"/>
    <property type="project" value="UniProtKB-KW"/>
</dbReference>
<dbReference type="GO" id="GO:0030145">
    <property type="term" value="F:manganese ion binding"/>
    <property type="evidence" value="ECO:0000318"/>
    <property type="project" value="GO_Central"/>
</dbReference>
<dbReference type="GO" id="GO:0004613">
    <property type="term" value="F:phosphoenolpyruvate carboxykinase (GTP) activity"/>
    <property type="evidence" value="ECO:0000250"/>
    <property type="project" value="UniProtKB"/>
</dbReference>
<dbReference type="GO" id="GO:0071333">
    <property type="term" value="P:cellular response to glucose stimulus"/>
    <property type="evidence" value="ECO:0000318"/>
    <property type="project" value="GO_Central"/>
</dbReference>
<dbReference type="GO" id="GO:0006094">
    <property type="term" value="P:gluconeogenesis"/>
    <property type="evidence" value="ECO:0000318"/>
    <property type="project" value="GO_Central"/>
</dbReference>
<dbReference type="GO" id="GO:0046327">
    <property type="term" value="P:glycerol biosynthetic process from pyruvate"/>
    <property type="evidence" value="ECO:0000318"/>
    <property type="project" value="GO_Central"/>
</dbReference>
<dbReference type="GO" id="GO:0006107">
    <property type="term" value="P:oxaloacetate metabolic process"/>
    <property type="evidence" value="ECO:0000318"/>
    <property type="project" value="GO_Central"/>
</dbReference>
<dbReference type="GO" id="GO:0019543">
    <property type="term" value="P:propionate catabolic process"/>
    <property type="evidence" value="ECO:0000318"/>
    <property type="project" value="GO_Central"/>
</dbReference>
<dbReference type="GO" id="GO:0033993">
    <property type="term" value="P:response to lipid"/>
    <property type="evidence" value="ECO:0000318"/>
    <property type="project" value="GO_Central"/>
</dbReference>
<dbReference type="GO" id="GO:0042594">
    <property type="term" value="P:response to starvation"/>
    <property type="evidence" value="ECO:0000318"/>
    <property type="project" value="GO_Central"/>
</dbReference>
<dbReference type="CDD" id="cd00819">
    <property type="entry name" value="PEPCK_GTP"/>
    <property type="match status" value="1"/>
</dbReference>
<dbReference type="FunFam" id="3.40.449.10:FF:000005">
    <property type="entry name" value="Phosphoenolpyruvate carboxykinase [GTP]"/>
    <property type="match status" value="1"/>
</dbReference>
<dbReference type="Gene3D" id="3.90.228.20">
    <property type="match status" value="1"/>
</dbReference>
<dbReference type="Gene3D" id="3.40.449.10">
    <property type="entry name" value="Phosphoenolpyruvate Carboxykinase, domain 1"/>
    <property type="match status" value="1"/>
</dbReference>
<dbReference type="Gene3D" id="2.170.8.10">
    <property type="entry name" value="Phosphoenolpyruvate Carboxykinase, domain 2"/>
    <property type="match status" value="1"/>
</dbReference>
<dbReference type="HAMAP" id="MF_00452">
    <property type="entry name" value="PEPCK_GTP"/>
    <property type="match status" value="1"/>
</dbReference>
<dbReference type="InterPro" id="IPR018091">
    <property type="entry name" value="PEP_carboxykin_GTP_CS"/>
</dbReference>
<dbReference type="InterPro" id="IPR013035">
    <property type="entry name" value="PEP_carboxykinase_C"/>
</dbReference>
<dbReference type="InterPro" id="IPR008209">
    <property type="entry name" value="PEP_carboxykinase_GTP"/>
</dbReference>
<dbReference type="InterPro" id="IPR035077">
    <property type="entry name" value="PEP_carboxykinase_GTP_C"/>
</dbReference>
<dbReference type="InterPro" id="IPR035078">
    <property type="entry name" value="PEP_carboxykinase_GTP_N"/>
</dbReference>
<dbReference type="InterPro" id="IPR008210">
    <property type="entry name" value="PEP_carboxykinase_N"/>
</dbReference>
<dbReference type="NCBIfam" id="NF003253">
    <property type="entry name" value="PRK04210.1"/>
    <property type="match status" value="1"/>
</dbReference>
<dbReference type="PANTHER" id="PTHR11561">
    <property type="entry name" value="PHOSPHOENOLPYRUVATE CARBOXYKINASE"/>
    <property type="match status" value="1"/>
</dbReference>
<dbReference type="PANTHER" id="PTHR11561:SF0">
    <property type="entry name" value="PHOSPHOENOLPYRUVATE CARBOXYKINASE [GTP]-RELATED"/>
    <property type="match status" value="1"/>
</dbReference>
<dbReference type="Pfam" id="PF00821">
    <property type="entry name" value="PEPCK_GTP"/>
    <property type="match status" value="1"/>
</dbReference>
<dbReference type="Pfam" id="PF17297">
    <property type="entry name" value="PEPCK_N"/>
    <property type="match status" value="1"/>
</dbReference>
<dbReference type="PIRSF" id="PIRSF001348">
    <property type="entry name" value="PEP_carboxykinase_GTP"/>
    <property type="match status" value="1"/>
</dbReference>
<dbReference type="SUPFAM" id="SSF68923">
    <property type="entry name" value="PEP carboxykinase N-terminal domain"/>
    <property type="match status" value="1"/>
</dbReference>
<dbReference type="SUPFAM" id="SSF53795">
    <property type="entry name" value="PEP carboxykinase-like"/>
    <property type="match status" value="1"/>
</dbReference>
<dbReference type="PROSITE" id="PS00505">
    <property type="entry name" value="PEPCK_GTP"/>
    <property type="match status" value="1"/>
</dbReference>
<evidence type="ECO:0000250" key="1"/>
<evidence type="ECO:0000250" key="2">
    <source>
        <dbReference type="UniProtKB" id="P21642"/>
    </source>
</evidence>
<evidence type="ECO:0000250" key="3">
    <source>
        <dbReference type="UniProtKB" id="Q16822"/>
    </source>
</evidence>
<evidence type="ECO:0000305" key="4"/>
<proteinExistence type="inferred from homology"/>
<feature type="transit peptide" description="Mitochondrion" evidence="1">
    <location>
        <begin position="1"/>
        <end position="51"/>
    </location>
</feature>
<feature type="chain" id="PRO_0000328603" description="Phosphoenolpyruvate carboxykinase [GTP], mitochondrial">
    <location>
        <begin position="52"/>
        <end position="653"/>
    </location>
</feature>
<feature type="binding site" evidence="2">
    <location>
        <position position="118"/>
    </location>
    <ligand>
        <name>phosphoenolpyruvate</name>
        <dbReference type="ChEBI" id="CHEBI:58702"/>
    </ligand>
</feature>
<feature type="binding site" evidence="2">
    <location>
        <position position="259"/>
    </location>
    <ligand>
        <name>phosphoenolpyruvate</name>
        <dbReference type="ChEBI" id="CHEBI:58702"/>
    </ligand>
</feature>
<feature type="binding site" evidence="2">
    <location>
        <position position="266"/>
    </location>
    <ligand>
        <name>Mn(2+)</name>
        <dbReference type="ChEBI" id="CHEBI:29035"/>
    </ligand>
</feature>
<feature type="binding site" evidence="2">
    <location>
        <position position="286"/>
    </location>
    <ligand>
        <name>Mn(2+)</name>
        <dbReference type="ChEBI" id="CHEBI:29035"/>
    </ligand>
</feature>
<feature type="binding site" evidence="2">
    <location>
        <position position="309"/>
    </location>
    <ligand>
        <name>GDP</name>
        <dbReference type="ChEBI" id="CHEBI:58189"/>
    </ligand>
</feature>
<feature type="binding site" evidence="2">
    <location>
        <position position="310"/>
    </location>
    <ligand>
        <name>GDP</name>
        <dbReference type="ChEBI" id="CHEBI:58189"/>
    </ligand>
</feature>
<feature type="binding site" evidence="2">
    <location>
        <position position="310"/>
    </location>
    <ligand>
        <name>Mn(2+)</name>
        <dbReference type="ChEBI" id="CHEBI:29035"/>
    </ligand>
</feature>
<feature type="binding site" evidence="2">
    <location>
        <position position="311"/>
    </location>
    <ligand>
        <name>GDP</name>
        <dbReference type="ChEBI" id="CHEBI:58189"/>
    </ligand>
</feature>
<feature type="binding site" evidence="2">
    <location>
        <position position="312"/>
    </location>
    <ligand>
        <name>GDP</name>
        <dbReference type="ChEBI" id="CHEBI:58189"/>
    </ligand>
</feature>
<feature type="binding site" evidence="2">
    <location>
        <position position="313"/>
    </location>
    <ligand>
        <name>GDP</name>
        <dbReference type="ChEBI" id="CHEBI:58189"/>
    </ligand>
</feature>
<feature type="binding site" evidence="2">
    <location>
        <position position="314"/>
    </location>
    <ligand>
        <name>GDP</name>
        <dbReference type="ChEBI" id="CHEBI:58189"/>
    </ligand>
</feature>
<feature type="binding site" evidence="2">
    <location>
        <position position="333"/>
    </location>
    <ligand>
        <name>Mn(2+)</name>
        <dbReference type="ChEBI" id="CHEBI:29035"/>
    </ligand>
</feature>
<feature type="binding site" evidence="2">
    <location>
        <position position="358"/>
    </location>
    <ligand>
        <name>GDP</name>
        <dbReference type="ChEBI" id="CHEBI:58189"/>
    </ligand>
</feature>
<feature type="binding site" evidence="2">
    <location>
        <position position="424"/>
    </location>
    <ligand>
        <name>phosphoenolpyruvate</name>
        <dbReference type="ChEBI" id="CHEBI:58702"/>
    </ligand>
</feature>
<feature type="binding site" evidence="2">
    <location>
        <position position="426"/>
    </location>
    <ligand>
        <name>phosphoenolpyruvate</name>
        <dbReference type="ChEBI" id="CHEBI:58702"/>
    </ligand>
</feature>
<feature type="binding site" evidence="2">
    <location>
        <position position="457"/>
    </location>
    <ligand>
        <name>GDP</name>
        <dbReference type="ChEBI" id="CHEBI:58189"/>
    </ligand>
</feature>
<feature type="binding site" evidence="2">
    <location>
        <position position="540"/>
    </location>
    <ligand>
        <name>GDP</name>
        <dbReference type="ChEBI" id="CHEBI:58189"/>
    </ligand>
</feature>
<feature type="binding site" evidence="2">
    <location>
        <position position="550"/>
    </location>
    <ligand>
        <name>GDP</name>
        <dbReference type="ChEBI" id="CHEBI:58189"/>
    </ligand>
</feature>
<feature type="binding site" evidence="2">
    <location>
        <position position="555"/>
    </location>
    <ligand>
        <name>GDP</name>
        <dbReference type="ChEBI" id="CHEBI:58189"/>
    </ligand>
</feature>
<feature type="binding site" evidence="2">
    <location>
        <position position="558"/>
    </location>
    <ligand>
        <name>GDP</name>
        <dbReference type="ChEBI" id="CHEBI:58189"/>
    </ligand>
</feature>
<comment type="function">
    <text evidence="3">Mitochondrial phosphoenolpyruvate carboxykinase that catalyzes the conversion of oxaloacetate (OAA) to phosphoenolpyruvate (PEP), the rate-limiting step in the metabolic pathway that produces glucose from lactate and other precursors derived from the citric acid cycle.</text>
</comment>
<comment type="catalytic activity">
    <reaction evidence="3">
        <text>oxaloacetate + GTP = phosphoenolpyruvate + GDP + CO2</text>
        <dbReference type="Rhea" id="RHEA:10388"/>
        <dbReference type="ChEBI" id="CHEBI:16452"/>
        <dbReference type="ChEBI" id="CHEBI:16526"/>
        <dbReference type="ChEBI" id="CHEBI:37565"/>
        <dbReference type="ChEBI" id="CHEBI:58189"/>
        <dbReference type="ChEBI" id="CHEBI:58702"/>
        <dbReference type="EC" id="4.1.1.32"/>
    </reaction>
    <physiologicalReaction direction="left-to-right" evidence="3">
        <dbReference type="Rhea" id="RHEA:10389"/>
    </physiologicalReaction>
</comment>
<comment type="cofactor">
    <cofactor evidence="3">
        <name>Mn(2+)</name>
        <dbReference type="ChEBI" id="CHEBI:29035"/>
    </cofactor>
    <text evidence="2">Binds 1 Mn(2+) ion per subunit.</text>
</comment>
<comment type="pathway">
    <text evidence="3">Carbohydrate biosynthesis; gluconeogenesis.</text>
</comment>
<comment type="subunit">
    <text evidence="2">Monomer.</text>
</comment>
<comment type="subcellular location">
    <subcellularLocation>
        <location evidence="3">Mitochondrion</location>
    </subcellularLocation>
</comment>
<comment type="miscellaneous">
    <text>In eukaryotes there are two isozymes: a cytoplasmic one and a mitochondrial one.</text>
</comment>
<comment type="similarity">
    <text evidence="4">Belongs to the phosphoenolpyruvate carboxykinase [GTP] family.</text>
</comment>
<organism>
    <name type="scientific">Dictyostelium discoideum</name>
    <name type="common">Social amoeba</name>
    <dbReference type="NCBI Taxonomy" id="44689"/>
    <lineage>
        <taxon>Eukaryota</taxon>
        <taxon>Amoebozoa</taxon>
        <taxon>Evosea</taxon>
        <taxon>Eumycetozoa</taxon>
        <taxon>Dictyostelia</taxon>
        <taxon>Dictyosteliales</taxon>
        <taxon>Dictyosteliaceae</taxon>
        <taxon>Dictyostelium</taxon>
    </lineage>
</organism>